<organism>
    <name type="scientific">Macaca nemestrina</name>
    <name type="common">Pig-tailed macaque</name>
    <dbReference type="NCBI Taxonomy" id="9545"/>
    <lineage>
        <taxon>Eukaryota</taxon>
        <taxon>Metazoa</taxon>
        <taxon>Chordata</taxon>
        <taxon>Craniata</taxon>
        <taxon>Vertebrata</taxon>
        <taxon>Euteleostomi</taxon>
        <taxon>Mammalia</taxon>
        <taxon>Eutheria</taxon>
        <taxon>Euarchontoglires</taxon>
        <taxon>Primates</taxon>
        <taxon>Haplorrhini</taxon>
        <taxon>Catarrhini</taxon>
        <taxon>Cercopithecidae</taxon>
        <taxon>Cercopithecinae</taxon>
        <taxon>Macaca</taxon>
    </lineage>
</organism>
<keyword id="KW-0053">Apoptosis</keyword>
<keyword id="KW-0068">Autocatalytic cleavage</keyword>
<keyword id="KW-0106">Calcium</keyword>
<keyword id="KW-0153">Cholesterol metabolism</keyword>
<keyword id="KW-0963">Cytoplasm</keyword>
<keyword id="KW-1015">Disulfide bond</keyword>
<keyword id="KW-0256">Endoplasmic reticulum</keyword>
<keyword id="KW-0967">Endosome</keyword>
<keyword id="KW-0325">Glycoprotein</keyword>
<keyword id="KW-0333">Golgi apparatus</keyword>
<keyword id="KW-0378">Hydrolase</keyword>
<keyword id="KW-0443">Lipid metabolism</keyword>
<keyword id="KW-0458">Lysosome</keyword>
<keyword id="KW-0597">Phosphoprotein</keyword>
<keyword id="KW-0645">Protease</keyword>
<keyword id="KW-1185">Reference proteome</keyword>
<keyword id="KW-0964">Secreted</keyword>
<keyword id="KW-0720">Serine protease</keyword>
<keyword id="KW-0732">Signal</keyword>
<keyword id="KW-0753">Steroid metabolism</keyword>
<keyword id="KW-1207">Sterol metabolism</keyword>
<keyword id="KW-0765">Sulfation</keyword>
<keyword id="KW-0865">Zymogen</keyword>
<accession>A8T662</accession>
<sequence>MGTVSSRRSWWPLPLPLLLLLLLGPAGARAQEDEDGDYEELVLALRSEEDGLADAPEHGATATFHRCAKDPWRLPGTYVVVLKEETHRSQSERTARRLQAQAARRGYLTKILHVFHHLLPGFLVKMSGDLLELALKLPHVDYIEEDSSVFAQSIPWNLERITPARYRADEYQPPKGGSLVEVYLLDTSIQSDHREIEGRVMVTDFESVPEEDGTRFHRQASKCDSHGTHLAGVVSGRDAGVAKGAGLRSLRVLNCQGKGTVSGTLIGLEFIRKSQLVQPVGPLVVLLPLAGGYSRVFNAACQRLARAGVVLVTAAGNFRDDACLYSPASAPEVITVGATNAQDQPVTLGTLGTNFGRCVDLFAPGEDIIGASSDCSTCFVSRSGTSQAAAHVAGIAAMMLSAEPELTLAELRQRLIHFSAKDVINEAWFPEDQRVLTPNLVAALPPSTHRAGWQLFCRTVWSAHSGPTRMATAVARCAQDEELLSCSSFSRSGKRRGERIEAQGGKRVCRAHNAFGGEGVYAIARCCLLPQVNCSVHTAPPAGASMGTRVHCHQQGHVLTGCSSHWEVEDLGTHKPPVLRPRGQPNQCVGHREASIHASCCHAPGLECKVKEHGIPAPQEQVIVACEDGWTLTGCSALPGTSHVLGAYAVDNTCVVRSRDVSTTGSTSEEAVAAVAICCRSRHLVQASQELQ</sequence>
<name>PCSK9_MACNE</name>
<protein>
    <recommendedName>
        <fullName>Proprotein convertase subtilisin/kexin type 9</fullName>
        <ecNumber>3.4.21.-</ecNumber>
    </recommendedName>
    <alternativeName>
        <fullName>Proprotein convertase 9</fullName>
        <shortName>PC9</shortName>
    </alternativeName>
    <alternativeName>
        <fullName>Subtilisin/kexin-like protease PC9</fullName>
    </alternativeName>
</protein>
<feature type="signal peptide" evidence="1">
    <location>
        <begin position="1"/>
        <end position="30"/>
    </location>
</feature>
<feature type="propeptide" id="PRO_0000318286" evidence="1">
    <location>
        <begin position="31"/>
        <end position="152"/>
    </location>
</feature>
<feature type="chain" id="PRO_0000318287" description="Proprotein convertase subtilisin/kexin type 9">
    <location>
        <begin position="153"/>
        <end position="692"/>
    </location>
</feature>
<feature type="domain" description="Inhibitor I9" evidence="3">
    <location>
        <begin position="77"/>
        <end position="149"/>
    </location>
</feature>
<feature type="domain" description="Peptidase S8" evidence="4">
    <location>
        <begin position="155"/>
        <end position="444"/>
    </location>
</feature>
<feature type="region of interest" description="C-terminal domain" evidence="1">
    <location>
        <begin position="450"/>
        <end position="692"/>
    </location>
</feature>
<feature type="active site" description="Charge relay system" evidence="4">
    <location>
        <position position="186"/>
    </location>
</feature>
<feature type="active site" description="Charge relay system" evidence="4">
    <location>
        <position position="226"/>
    </location>
</feature>
<feature type="active site" description="Charge relay system" evidence="4">
    <location>
        <position position="386"/>
    </location>
</feature>
<feature type="site" description="Cleavage; by autolysis" evidence="1">
    <location>
        <begin position="152"/>
        <end position="153"/>
    </location>
</feature>
<feature type="site" description="Cleavage; by furin and PCSK5" evidence="1">
    <location>
        <begin position="218"/>
        <end position="219"/>
    </location>
</feature>
<feature type="modified residue" description="Sulfotyrosine" evidence="1">
    <location>
        <position position="38"/>
    </location>
</feature>
<feature type="modified residue" description="Phosphoserine" evidence="2">
    <location>
        <position position="47"/>
    </location>
</feature>
<feature type="modified residue" description="Phosphoserine" evidence="2">
    <location>
        <position position="688"/>
    </location>
</feature>
<feature type="glycosylation site" description="N-linked (GlcNAc...) asparagine" evidence="3">
    <location>
        <position position="533"/>
    </location>
</feature>
<feature type="disulfide bond" evidence="3">
    <location>
        <begin position="223"/>
        <end position="255"/>
    </location>
</feature>
<feature type="disulfide bond" evidence="3">
    <location>
        <begin position="323"/>
        <end position="358"/>
    </location>
</feature>
<feature type="disulfide bond" evidence="3">
    <location>
        <begin position="457"/>
        <end position="527"/>
    </location>
</feature>
<feature type="disulfide bond" evidence="3">
    <location>
        <begin position="477"/>
        <end position="526"/>
    </location>
</feature>
<feature type="disulfide bond" evidence="3">
    <location>
        <begin position="486"/>
        <end position="509"/>
    </location>
</feature>
<feature type="disulfide bond" evidence="3">
    <location>
        <begin position="534"/>
        <end position="601"/>
    </location>
</feature>
<feature type="disulfide bond" evidence="3">
    <location>
        <begin position="552"/>
        <end position="600"/>
    </location>
</feature>
<feature type="disulfide bond" evidence="3">
    <location>
        <begin position="562"/>
        <end position="588"/>
    </location>
</feature>
<feature type="disulfide bond" evidence="3">
    <location>
        <begin position="608"/>
        <end position="679"/>
    </location>
</feature>
<feature type="disulfide bond" evidence="3">
    <location>
        <begin position="626"/>
        <end position="678"/>
    </location>
</feature>
<feature type="disulfide bond" evidence="3">
    <location>
        <begin position="635"/>
        <end position="654"/>
    </location>
</feature>
<evidence type="ECO:0000250" key="1"/>
<evidence type="ECO:0000250" key="2">
    <source>
        <dbReference type="UniProtKB" id="Q8NBP7"/>
    </source>
</evidence>
<evidence type="ECO:0000255" key="3"/>
<evidence type="ECO:0000255" key="4">
    <source>
        <dbReference type="PROSITE-ProRule" id="PRU01240"/>
    </source>
</evidence>
<evidence type="ECO:0000305" key="5"/>
<reference key="1">
    <citation type="journal article" date="2007" name="PLoS ONE">
        <title>Evidence for positive selection in the C-terminal domain of the cholesterol metabolism gene PCSK9 based on phylogenetic analysis in 14 primate species.</title>
        <authorList>
            <person name="Ding K."/>
            <person name="McDonough S.J."/>
            <person name="Kullo I.J."/>
        </authorList>
    </citation>
    <scope>NUCLEOTIDE SEQUENCE [MRNA]</scope>
</reference>
<proteinExistence type="evidence at transcript level"/>
<dbReference type="EC" id="3.4.21.-"/>
<dbReference type="EMBL" id="EF692501">
    <property type="protein sequence ID" value="ABV59221.1"/>
    <property type="molecule type" value="mRNA"/>
</dbReference>
<dbReference type="SMR" id="A8T662"/>
<dbReference type="STRING" id="9545.ENSMNEP00000025186"/>
<dbReference type="GlyCosmos" id="A8T662">
    <property type="glycosylation" value="1 site, No reported glycans"/>
</dbReference>
<dbReference type="Proteomes" id="UP000233120">
    <property type="component" value="Unassembled WGS sequence"/>
</dbReference>
<dbReference type="GO" id="GO:0009986">
    <property type="term" value="C:cell surface"/>
    <property type="evidence" value="ECO:0000250"/>
    <property type="project" value="UniProtKB"/>
</dbReference>
<dbReference type="GO" id="GO:0005737">
    <property type="term" value="C:cytoplasm"/>
    <property type="evidence" value="ECO:0000250"/>
    <property type="project" value="UniProtKB"/>
</dbReference>
<dbReference type="GO" id="GO:0005769">
    <property type="term" value="C:early endosome"/>
    <property type="evidence" value="ECO:0000250"/>
    <property type="project" value="UniProtKB"/>
</dbReference>
<dbReference type="GO" id="GO:0005783">
    <property type="term" value="C:endoplasmic reticulum"/>
    <property type="evidence" value="ECO:0000250"/>
    <property type="project" value="UniProtKB"/>
</dbReference>
<dbReference type="GO" id="GO:0005615">
    <property type="term" value="C:extracellular space"/>
    <property type="evidence" value="ECO:0007669"/>
    <property type="project" value="TreeGrafter"/>
</dbReference>
<dbReference type="GO" id="GO:0005794">
    <property type="term" value="C:Golgi apparatus"/>
    <property type="evidence" value="ECO:0000250"/>
    <property type="project" value="UniProtKB"/>
</dbReference>
<dbReference type="GO" id="GO:0005770">
    <property type="term" value="C:late endosome"/>
    <property type="evidence" value="ECO:0000250"/>
    <property type="project" value="UniProtKB"/>
</dbReference>
<dbReference type="GO" id="GO:0005764">
    <property type="term" value="C:lysosome"/>
    <property type="evidence" value="ECO:0000250"/>
    <property type="project" value="UniProtKB"/>
</dbReference>
<dbReference type="GO" id="GO:0034185">
    <property type="term" value="F:apolipoprotein binding"/>
    <property type="evidence" value="ECO:0000250"/>
    <property type="project" value="UniProtKB"/>
</dbReference>
<dbReference type="GO" id="GO:0030169">
    <property type="term" value="F:low-density lipoprotein particle binding"/>
    <property type="evidence" value="ECO:0000250"/>
    <property type="project" value="UniProtKB"/>
</dbReference>
<dbReference type="GO" id="GO:0004252">
    <property type="term" value="F:serine-type endopeptidase activity"/>
    <property type="evidence" value="ECO:0007669"/>
    <property type="project" value="InterPro"/>
</dbReference>
<dbReference type="GO" id="GO:0034189">
    <property type="term" value="F:very-low-density lipoprotein particle binding"/>
    <property type="evidence" value="ECO:0000250"/>
    <property type="project" value="UniProtKB"/>
</dbReference>
<dbReference type="GO" id="GO:0006915">
    <property type="term" value="P:apoptotic process"/>
    <property type="evidence" value="ECO:0007669"/>
    <property type="project" value="UniProtKB-KW"/>
</dbReference>
<dbReference type="GO" id="GO:0008203">
    <property type="term" value="P:cholesterol metabolic process"/>
    <property type="evidence" value="ECO:0007669"/>
    <property type="project" value="UniProtKB-KW"/>
</dbReference>
<dbReference type="GO" id="GO:0032802">
    <property type="term" value="P:low-density lipoprotein particle receptor catabolic process"/>
    <property type="evidence" value="ECO:0000250"/>
    <property type="project" value="UniProtKB"/>
</dbReference>
<dbReference type="GO" id="GO:0006508">
    <property type="term" value="P:proteolysis"/>
    <property type="evidence" value="ECO:0007669"/>
    <property type="project" value="UniProtKB-KW"/>
</dbReference>
<dbReference type="GO" id="GO:0043523">
    <property type="term" value="P:regulation of neuron apoptotic process"/>
    <property type="evidence" value="ECO:0000250"/>
    <property type="project" value="UniProtKB"/>
</dbReference>
<dbReference type="CDD" id="cd16839">
    <property type="entry name" value="PCSK9_C-CRD"/>
    <property type="match status" value="1"/>
</dbReference>
<dbReference type="CDD" id="cd04077">
    <property type="entry name" value="Peptidases_S8_PCSK9_ProteinaseK_like"/>
    <property type="match status" value="1"/>
</dbReference>
<dbReference type="FunFam" id="2.60.120.690:FF:000001">
    <property type="entry name" value="Proprotein convertase subtilisin/kexin type 9"/>
    <property type="match status" value="1"/>
</dbReference>
<dbReference type="FunFam" id="3.30.70.80:FF:000004">
    <property type="entry name" value="Proprotein convertase subtilisin/kexin type 9"/>
    <property type="match status" value="1"/>
</dbReference>
<dbReference type="FunFam" id="3.40.50.200:FF:000016">
    <property type="entry name" value="Proprotein convertase subtilisin/kexin type 9"/>
    <property type="match status" value="1"/>
</dbReference>
<dbReference type="Gene3D" id="3.30.70.80">
    <property type="entry name" value="Peptidase S8 propeptide/proteinase inhibitor I9"/>
    <property type="match status" value="1"/>
</dbReference>
<dbReference type="Gene3D" id="3.40.50.200">
    <property type="entry name" value="Peptidase S8/S53 domain"/>
    <property type="match status" value="1"/>
</dbReference>
<dbReference type="Gene3D" id="2.60.120.690">
    <property type="entry name" value="Proprotein convertase subtilisin/kexin type 9"/>
    <property type="match status" value="1"/>
</dbReference>
<dbReference type="InterPro" id="IPR041254">
    <property type="entry name" value="PCSK9_C1"/>
</dbReference>
<dbReference type="InterPro" id="IPR041052">
    <property type="entry name" value="PCSK9_C2"/>
</dbReference>
<dbReference type="InterPro" id="IPR041051">
    <property type="entry name" value="PCSK9_C3"/>
</dbReference>
<dbReference type="InterPro" id="IPR034193">
    <property type="entry name" value="PCSK9_ProteinaseK-like"/>
</dbReference>
<dbReference type="InterPro" id="IPR000209">
    <property type="entry name" value="Peptidase_S8/S53_dom"/>
</dbReference>
<dbReference type="InterPro" id="IPR036852">
    <property type="entry name" value="Peptidase_S8/S53_dom_sf"/>
</dbReference>
<dbReference type="InterPro" id="IPR050131">
    <property type="entry name" value="Peptidase_S8_subtilisin-like"/>
</dbReference>
<dbReference type="InterPro" id="IPR015500">
    <property type="entry name" value="Peptidase_S8_subtilisin-rel"/>
</dbReference>
<dbReference type="InterPro" id="IPR010259">
    <property type="entry name" value="S8pro/Inhibitor_I9"/>
</dbReference>
<dbReference type="InterPro" id="IPR037045">
    <property type="entry name" value="S8pro/Inhibitor_I9_sf"/>
</dbReference>
<dbReference type="PANTHER" id="PTHR43806">
    <property type="entry name" value="PEPTIDASE S8"/>
    <property type="match status" value="1"/>
</dbReference>
<dbReference type="PANTHER" id="PTHR43806:SF60">
    <property type="entry name" value="PROPROTEIN CONVERTASE SUBTILISIN_KEXIN TYPE 9"/>
    <property type="match status" value="1"/>
</dbReference>
<dbReference type="Pfam" id="PF05922">
    <property type="entry name" value="Inhibitor_I9"/>
    <property type="match status" value="1"/>
</dbReference>
<dbReference type="Pfam" id="PF18459">
    <property type="entry name" value="PCSK9_C1"/>
    <property type="match status" value="1"/>
</dbReference>
<dbReference type="Pfam" id="PF18464">
    <property type="entry name" value="PCSK9_C2"/>
    <property type="match status" value="1"/>
</dbReference>
<dbReference type="Pfam" id="PF18463">
    <property type="entry name" value="PCSK9_C3"/>
    <property type="match status" value="1"/>
</dbReference>
<dbReference type="Pfam" id="PF00082">
    <property type="entry name" value="Peptidase_S8"/>
    <property type="match status" value="1"/>
</dbReference>
<dbReference type="PRINTS" id="PR00723">
    <property type="entry name" value="SUBTILISIN"/>
</dbReference>
<dbReference type="SUPFAM" id="SSF54897">
    <property type="entry name" value="Protease propeptides/inhibitors"/>
    <property type="match status" value="1"/>
</dbReference>
<dbReference type="SUPFAM" id="SSF52743">
    <property type="entry name" value="Subtilisin-like"/>
    <property type="match status" value="1"/>
</dbReference>
<dbReference type="PROSITE" id="PS51892">
    <property type="entry name" value="SUBTILASE"/>
    <property type="match status" value="1"/>
</dbReference>
<comment type="function">
    <text evidence="1">Crucial player in the regulation of plasma cholesterol homeostasis. Binds to low-density lipid receptor family members: low density lipoprotein receptor (LDLR), very low density lipoprotein receptor (VLDLR), apolipoprotein E receptor (LRP1/APOER) and apolipoprotein receptor 2 (LRP8/APOER2), and promotes their degradation in intracellular acidic compartments. Acts via a non-proteolytic mechanism to enhance the degradation of the hepatic LDLR through a clathrin LDLRAP1/ARH-mediated pathway. May prevent the recycling of LDLR from endosomes to the cell surface or direct it to lysosomes for degradation. Can induce ubiquitination of LDLR leading to its subsequent degradation. Inhibits intracellular degradation of APOB via the autophagosome/lysosome pathway in a LDLR-independent manner. Involved in the disposal of non-acetylated intermediates of BACE1 in the early secretory pathway. Inhibits epithelial Na(+) channel (ENaC)-mediated Na(+) absorption by reducing ENaC surface expression primarily by increasing its proteasomal degradation. Regulates neuronal apoptosis via modulation of LRP8/APOER2 levels and related anti-apoptotic signaling pathways (By similarity).</text>
</comment>
<comment type="cofactor">
    <cofactor evidence="1">
        <name>Ca(2+)</name>
        <dbReference type="ChEBI" id="CHEBI:29108"/>
    </cofactor>
</comment>
<comment type="activity regulation">
    <text evidence="1">Its proteolytic activity is autoinhibited by the non-covalent binding of the propeptide to the catalytic domain. Inhibited by EGTA (By similarity).</text>
</comment>
<comment type="subunit">
    <text evidence="2">Monomer. Can self-associate to form dimers and higher multimers which may have increased LDLR degrading activity. The precursor protein but not the mature protein may form multimers. Interacts with APOB, VLDLR, LRP8/APOER2 and BACE1. The full-length immature form (pro-PCSK9) interacts with SCNN1A, SCNN1B and SCNN1G. The pro-PCSK9 form (via C-terminal domain) interacts with LDLR. Interacts (via the C-terminal domain) with ANXA2 (via repeat Annexin 1); the interaction inhibits the degradation of LDLR.</text>
</comment>
<comment type="subcellular location">
    <subcellularLocation>
        <location evidence="1">Cytoplasm</location>
    </subcellularLocation>
    <subcellularLocation>
        <location evidence="1">Secreted</location>
    </subcellularLocation>
    <subcellularLocation>
        <location evidence="1">Endosome</location>
    </subcellularLocation>
    <subcellularLocation>
        <location evidence="1">Lysosome</location>
    </subcellularLocation>
    <subcellularLocation>
        <location evidence="1">Cell surface</location>
    </subcellularLocation>
    <subcellularLocation>
        <location evidence="1">Endoplasmic reticulum</location>
    </subcellularLocation>
    <subcellularLocation>
        <location evidence="1">Golgi apparatus</location>
    </subcellularLocation>
    <text evidence="1">Autocatalytic cleavage is required to transport it from the endoplasmic reticulum to the Golgi apparatus and for the secretion of the mature protein. Localizes to the endoplasmic reticulum in the absence of LDLR and colocalizes to the cell surface and to the endosomes/lysosomes in the presence of LDLR. The sorting to the cell surface and endosomes is required in order to fully promote LDLR degradation (By similarity).</text>
</comment>
<comment type="domain">
    <text evidence="1">The C-terminal domain (CRD) is essential for the LDLR-binding and degrading activities.</text>
</comment>
<comment type="domain">
    <text evidence="1">The catalytic domain is responsible for mediating its self-association.</text>
</comment>
<comment type="PTM">
    <text evidence="1">Cleavage by furin and PCSK5 generates a truncated inactive protein that is unable to induce LDLR degradation.</text>
</comment>
<comment type="PTM">
    <text evidence="1">Undergoes autocatalytic cleavage in the endoplasmic reticulum to release the propeptide from the N-terminus and the cleavage of the propeptide is strictly required for its maturation and activation. The cleaved propeptide however remains associated with the catalytic domain through non-covalent interactions, preventing potential substrates from accessing its active site. As a result, it is secreted from cells as a propeptide-containing, enzymatically inactive protein (By similarity).</text>
</comment>
<comment type="PTM">
    <text evidence="1">Phosphorylation protects the propeptide against proteolysis.</text>
</comment>
<comment type="similarity">
    <text evidence="5">Belongs to the peptidase S8 family.</text>
</comment>
<gene>
    <name type="primary">PCSK9</name>
</gene>